<sequence>MHRTGLIAAAGCLATLVFASAAEAQSMTTNEVKGTSISRKWRGTAGLVTTGPDGKVIFLFGETQPSVVCSPLQVCDIELQGGEIVRDVLVGDSVRWKVEPATSGATGGQAIHLIVKPSEPGLVTSMVVTTSRRTYHIQLKSHPSQYMARVGFEYPEDVSTKLADINSRLETGGIPGTAPDKLNFSYSVSGSAPWKPKRVYSDGAKTYVQFSKSISGQDAPVLFVVSGGQNRIVNYRMNNDMMIVDYAVDKAILVSGVGWRQQKITIRRGG</sequence>
<proteinExistence type="inferred from homology"/>
<geneLocation type="plasmid">
    <name>sym pNGR234a</name>
</geneLocation>
<organism>
    <name type="scientific">Sinorhizobium fredii (strain NBRC 101917 / NGR234)</name>
    <dbReference type="NCBI Taxonomy" id="394"/>
    <lineage>
        <taxon>Bacteria</taxon>
        <taxon>Pseudomonadati</taxon>
        <taxon>Pseudomonadota</taxon>
        <taxon>Alphaproteobacteria</taxon>
        <taxon>Hyphomicrobiales</taxon>
        <taxon>Rhizobiaceae</taxon>
        <taxon>Sinorhizobium/Ensifer group</taxon>
        <taxon>Sinorhizobium</taxon>
    </lineage>
</organism>
<evidence type="ECO:0000255" key="1"/>
<evidence type="ECO:0000305" key="2"/>
<keyword id="KW-0184">Conjugation</keyword>
<keyword id="KW-0574">Periplasm</keyword>
<keyword id="KW-0614">Plasmid</keyword>
<keyword id="KW-1185">Reference proteome</keyword>
<keyword id="KW-0732">Signal</keyword>
<protein>
    <recommendedName>
        <fullName>Probable conjugal transfer protein TrbG</fullName>
    </recommendedName>
</protein>
<gene>
    <name type="primary">trbG</name>
    <name type="ordered locus">NGR_a04120</name>
    <name type="ORF">y4dE</name>
</gene>
<accession>P55404</accession>
<name>TRBG_SINFN</name>
<comment type="subcellular location">
    <subcellularLocation>
        <location evidence="2">Periplasm</location>
    </subcellularLocation>
</comment>
<comment type="similarity">
    <text evidence="2">Belongs to the TrbG/VirB9 family.</text>
</comment>
<reference key="1">
    <citation type="journal article" date="1997" name="Nature">
        <title>Molecular basis of symbiosis between Rhizobium and legumes.</title>
        <authorList>
            <person name="Freiberg C.A."/>
            <person name="Fellay R."/>
            <person name="Bairoch A."/>
            <person name="Broughton W.J."/>
            <person name="Rosenthal A."/>
            <person name="Perret X."/>
        </authorList>
    </citation>
    <scope>NUCLEOTIDE SEQUENCE [LARGE SCALE GENOMIC DNA]</scope>
    <source>
        <strain>NBRC 101917 / NGR234</strain>
    </source>
</reference>
<reference key="2">
    <citation type="journal article" date="2009" name="Appl. Environ. Microbiol.">
        <title>Rhizobium sp. strain NGR234 possesses a remarkable number of secretion systems.</title>
        <authorList>
            <person name="Schmeisser C."/>
            <person name="Liesegang H."/>
            <person name="Krysciak D."/>
            <person name="Bakkou N."/>
            <person name="Le Quere A."/>
            <person name="Wollherr A."/>
            <person name="Heinemeyer I."/>
            <person name="Morgenstern B."/>
            <person name="Pommerening-Roeser A."/>
            <person name="Flores M."/>
            <person name="Palacios R."/>
            <person name="Brenner S."/>
            <person name="Gottschalk G."/>
            <person name="Schmitz R.A."/>
            <person name="Broughton W.J."/>
            <person name="Perret X."/>
            <person name="Strittmatter A.W."/>
            <person name="Streit W.R."/>
        </authorList>
    </citation>
    <scope>NUCLEOTIDE SEQUENCE [LARGE SCALE GENOMIC DNA]</scope>
    <source>
        <strain>NBRC 101917 / NGR234</strain>
    </source>
</reference>
<dbReference type="EMBL" id="U00090">
    <property type="protein sequence ID" value="AAB92437.1"/>
    <property type="molecule type" value="Genomic_DNA"/>
</dbReference>
<dbReference type="RefSeq" id="NP_443814.1">
    <property type="nucleotide sequence ID" value="NC_000914.2"/>
</dbReference>
<dbReference type="RefSeq" id="WP_010875422.1">
    <property type="nucleotide sequence ID" value="NC_000914.2"/>
</dbReference>
<dbReference type="SMR" id="P55404"/>
<dbReference type="KEGG" id="rhi:NGR_a04120"/>
<dbReference type="PATRIC" id="fig|394.7.peg.433"/>
<dbReference type="eggNOG" id="COG3504">
    <property type="taxonomic scope" value="Bacteria"/>
</dbReference>
<dbReference type="HOGENOM" id="CLU_058585_1_1_5"/>
<dbReference type="OrthoDB" id="9815808at2"/>
<dbReference type="Proteomes" id="UP000001054">
    <property type="component" value="Plasmid pNGR234a"/>
</dbReference>
<dbReference type="GO" id="GO:0042597">
    <property type="term" value="C:periplasmic space"/>
    <property type="evidence" value="ECO:0007669"/>
    <property type="project" value="UniProtKB-SubCell"/>
</dbReference>
<dbReference type="CDD" id="cd06911">
    <property type="entry name" value="VirB9_CagX_TrbG"/>
    <property type="match status" value="1"/>
</dbReference>
<dbReference type="Gene3D" id="2.60.40.2500">
    <property type="match status" value="1"/>
</dbReference>
<dbReference type="InterPro" id="IPR010258">
    <property type="entry name" value="Conjugal_tfr_TrbG/VirB9/CagX"/>
</dbReference>
<dbReference type="InterPro" id="IPR014142">
    <property type="entry name" value="TrbG_Ti"/>
</dbReference>
<dbReference type="InterPro" id="IPR033645">
    <property type="entry name" value="VirB9/CagX/TrbG_C"/>
</dbReference>
<dbReference type="InterPro" id="IPR038161">
    <property type="entry name" value="VirB9/CagX/TrbG_C_sf"/>
</dbReference>
<dbReference type="NCBIfam" id="NF010413">
    <property type="entry name" value="PRK13839.1"/>
    <property type="match status" value="1"/>
</dbReference>
<dbReference type="NCBIfam" id="TIGR02775">
    <property type="entry name" value="TrbG_Ti"/>
    <property type="match status" value="1"/>
</dbReference>
<dbReference type="Pfam" id="PF03524">
    <property type="entry name" value="CagX"/>
    <property type="match status" value="1"/>
</dbReference>
<feature type="signal peptide" evidence="1">
    <location>
        <begin position="1"/>
        <end position="24"/>
    </location>
</feature>
<feature type="chain" id="PRO_0000022583" description="Probable conjugal transfer protein TrbG">
    <location>
        <begin position="25"/>
        <end position="270"/>
    </location>
</feature>